<protein>
    <recommendedName>
        <fullName evidence="2">Elongation factor Tu 2</fullName>
        <shortName evidence="2">EF-Tu 2</shortName>
        <ecNumber evidence="2">3.6.5.3</ecNumber>
    </recommendedName>
</protein>
<keyword id="KW-0963">Cytoplasm</keyword>
<keyword id="KW-0251">Elongation factor</keyword>
<keyword id="KW-0342">GTP-binding</keyword>
<keyword id="KW-0378">Hydrolase</keyword>
<keyword id="KW-0460">Magnesium</keyword>
<keyword id="KW-0479">Metal-binding</keyword>
<keyword id="KW-0547">Nucleotide-binding</keyword>
<keyword id="KW-0648">Protein biosynthesis</keyword>
<reference key="1">
    <citation type="journal article" date="2004" name="Proc. Natl. Acad. Sci. U.S.A.">
        <title>Insights into the evolution of Yersinia pestis through whole-genome comparison with Yersinia pseudotuberculosis.</title>
        <authorList>
            <person name="Chain P.S.G."/>
            <person name="Carniel E."/>
            <person name="Larimer F.W."/>
            <person name="Lamerdin J."/>
            <person name="Stoutland P.O."/>
            <person name="Regala W.M."/>
            <person name="Georgescu A.M."/>
            <person name="Vergez L.M."/>
            <person name="Land M.L."/>
            <person name="Motin V.L."/>
            <person name="Brubaker R.R."/>
            <person name="Fowler J."/>
            <person name="Hinnebusch J."/>
            <person name="Marceau M."/>
            <person name="Medigue C."/>
            <person name="Simonet M."/>
            <person name="Chenal-Francisque V."/>
            <person name="Souza B."/>
            <person name="Dacheux D."/>
            <person name="Elliott J.M."/>
            <person name="Derbise A."/>
            <person name="Hauser L.J."/>
            <person name="Garcia E."/>
        </authorList>
    </citation>
    <scope>NUCLEOTIDE SEQUENCE [LARGE SCALE GENOMIC DNA]</scope>
    <source>
        <strain>IP32953</strain>
    </source>
</reference>
<gene>
    <name evidence="2" type="primary">tuf2</name>
    <name type="ordered locus">YPTB3702</name>
</gene>
<evidence type="ECO:0000250" key="1"/>
<evidence type="ECO:0000255" key="2">
    <source>
        <dbReference type="HAMAP-Rule" id="MF_00118"/>
    </source>
</evidence>
<accession>Q664R7</accession>
<name>EFTU2_YERPS</name>
<proteinExistence type="inferred from homology"/>
<dbReference type="EC" id="3.6.5.3" evidence="2"/>
<dbReference type="EMBL" id="BX936398">
    <property type="protein sequence ID" value="CAH22940.1"/>
    <property type="molecule type" value="Genomic_DNA"/>
</dbReference>
<dbReference type="SMR" id="Q664R7"/>
<dbReference type="KEGG" id="ypo:BZ17_2885"/>
<dbReference type="KEGG" id="yps:YPTB3702"/>
<dbReference type="PATRIC" id="fig|273123.14.peg.3026"/>
<dbReference type="Proteomes" id="UP000001011">
    <property type="component" value="Chromosome"/>
</dbReference>
<dbReference type="GO" id="GO:0005829">
    <property type="term" value="C:cytosol"/>
    <property type="evidence" value="ECO:0007669"/>
    <property type="project" value="TreeGrafter"/>
</dbReference>
<dbReference type="GO" id="GO:0005525">
    <property type="term" value="F:GTP binding"/>
    <property type="evidence" value="ECO:0007669"/>
    <property type="project" value="UniProtKB-UniRule"/>
</dbReference>
<dbReference type="GO" id="GO:0003924">
    <property type="term" value="F:GTPase activity"/>
    <property type="evidence" value="ECO:0007669"/>
    <property type="project" value="InterPro"/>
</dbReference>
<dbReference type="GO" id="GO:0097216">
    <property type="term" value="F:guanosine tetraphosphate binding"/>
    <property type="evidence" value="ECO:0007669"/>
    <property type="project" value="UniProtKB-ARBA"/>
</dbReference>
<dbReference type="GO" id="GO:0003746">
    <property type="term" value="F:translation elongation factor activity"/>
    <property type="evidence" value="ECO:0007669"/>
    <property type="project" value="UniProtKB-UniRule"/>
</dbReference>
<dbReference type="CDD" id="cd01884">
    <property type="entry name" value="EF_Tu"/>
    <property type="match status" value="1"/>
</dbReference>
<dbReference type="CDD" id="cd03697">
    <property type="entry name" value="EFTU_II"/>
    <property type="match status" value="1"/>
</dbReference>
<dbReference type="CDD" id="cd03707">
    <property type="entry name" value="EFTU_III"/>
    <property type="match status" value="1"/>
</dbReference>
<dbReference type="FunFam" id="2.40.30.10:FF:000001">
    <property type="entry name" value="Elongation factor Tu"/>
    <property type="match status" value="1"/>
</dbReference>
<dbReference type="FunFam" id="3.40.50.300:FF:000003">
    <property type="entry name" value="Elongation factor Tu"/>
    <property type="match status" value="1"/>
</dbReference>
<dbReference type="Gene3D" id="3.40.50.300">
    <property type="entry name" value="P-loop containing nucleotide triphosphate hydrolases"/>
    <property type="match status" value="1"/>
</dbReference>
<dbReference type="Gene3D" id="2.40.30.10">
    <property type="entry name" value="Translation factors"/>
    <property type="match status" value="2"/>
</dbReference>
<dbReference type="HAMAP" id="MF_00118_B">
    <property type="entry name" value="EF_Tu_B"/>
    <property type="match status" value="1"/>
</dbReference>
<dbReference type="InterPro" id="IPR041709">
    <property type="entry name" value="EF-Tu_GTP-bd"/>
</dbReference>
<dbReference type="InterPro" id="IPR050055">
    <property type="entry name" value="EF-Tu_GTPase"/>
</dbReference>
<dbReference type="InterPro" id="IPR004161">
    <property type="entry name" value="EFTu-like_2"/>
</dbReference>
<dbReference type="InterPro" id="IPR033720">
    <property type="entry name" value="EFTU_2"/>
</dbReference>
<dbReference type="InterPro" id="IPR031157">
    <property type="entry name" value="G_TR_CS"/>
</dbReference>
<dbReference type="InterPro" id="IPR027417">
    <property type="entry name" value="P-loop_NTPase"/>
</dbReference>
<dbReference type="InterPro" id="IPR005225">
    <property type="entry name" value="Small_GTP-bd"/>
</dbReference>
<dbReference type="InterPro" id="IPR000795">
    <property type="entry name" value="T_Tr_GTP-bd_dom"/>
</dbReference>
<dbReference type="InterPro" id="IPR009000">
    <property type="entry name" value="Transl_B-barrel_sf"/>
</dbReference>
<dbReference type="InterPro" id="IPR009001">
    <property type="entry name" value="Transl_elong_EF1A/Init_IF2_C"/>
</dbReference>
<dbReference type="InterPro" id="IPR004541">
    <property type="entry name" value="Transl_elong_EFTu/EF1A_bac/org"/>
</dbReference>
<dbReference type="InterPro" id="IPR004160">
    <property type="entry name" value="Transl_elong_EFTu/EF1A_C"/>
</dbReference>
<dbReference type="NCBIfam" id="TIGR00485">
    <property type="entry name" value="EF-Tu"/>
    <property type="match status" value="1"/>
</dbReference>
<dbReference type="NCBIfam" id="NF000766">
    <property type="entry name" value="PRK00049.1"/>
    <property type="match status" value="1"/>
</dbReference>
<dbReference type="NCBIfam" id="NF009372">
    <property type="entry name" value="PRK12735.1"/>
    <property type="match status" value="1"/>
</dbReference>
<dbReference type="NCBIfam" id="NF009373">
    <property type="entry name" value="PRK12736.1"/>
    <property type="match status" value="1"/>
</dbReference>
<dbReference type="NCBIfam" id="TIGR00231">
    <property type="entry name" value="small_GTP"/>
    <property type="match status" value="1"/>
</dbReference>
<dbReference type="PANTHER" id="PTHR43721:SF22">
    <property type="entry name" value="ELONGATION FACTOR TU, MITOCHONDRIAL"/>
    <property type="match status" value="1"/>
</dbReference>
<dbReference type="PANTHER" id="PTHR43721">
    <property type="entry name" value="ELONGATION FACTOR TU-RELATED"/>
    <property type="match status" value="1"/>
</dbReference>
<dbReference type="Pfam" id="PF00009">
    <property type="entry name" value="GTP_EFTU"/>
    <property type="match status" value="1"/>
</dbReference>
<dbReference type="Pfam" id="PF03144">
    <property type="entry name" value="GTP_EFTU_D2"/>
    <property type="match status" value="1"/>
</dbReference>
<dbReference type="Pfam" id="PF03143">
    <property type="entry name" value="GTP_EFTU_D3"/>
    <property type="match status" value="1"/>
</dbReference>
<dbReference type="PRINTS" id="PR00315">
    <property type="entry name" value="ELONGATNFCT"/>
</dbReference>
<dbReference type="SUPFAM" id="SSF50465">
    <property type="entry name" value="EF-Tu/eEF-1alpha/eIF2-gamma C-terminal domain"/>
    <property type="match status" value="1"/>
</dbReference>
<dbReference type="SUPFAM" id="SSF52540">
    <property type="entry name" value="P-loop containing nucleoside triphosphate hydrolases"/>
    <property type="match status" value="1"/>
</dbReference>
<dbReference type="SUPFAM" id="SSF50447">
    <property type="entry name" value="Translation proteins"/>
    <property type="match status" value="1"/>
</dbReference>
<dbReference type="PROSITE" id="PS00301">
    <property type="entry name" value="G_TR_1"/>
    <property type="match status" value="1"/>
</dbReference>
<dbReference type="PROSITE" id="PS51722">
    <property type="entry name" value="G_TR_2"/>
    <property type="match status" value="1"/>
</dbReference>
<comment type="function">
    <text evidence="2">GTP hydrolase that promotes the GTP-dependent binding of aminoacyl-tRNA to the A-site of ribosomes during protein biosynthesis.</text>
</comment>
<comment type="catalytic activity">
    <reaction evidence="2">
        <text>GTP + H2O = GDP + phosphate + H(+)</text>
        <dbReference type="Rhea" id="RHEA:19669"/>
        <dbReference type="ChEBI" id="CHEBI:15377"/>
        <dbReference type="ChEBI" id="CHEBI:15378"/>
        <dbReference type="ChEBI" id="CHEBI:37565"/>
        <dbReference type="ChEBI" id="CHEBI:43474"/>
        <dbReference type="ChEBI" id="CHEBI:58189"/>
        <dbReference type="EC" id="3.6.5.3"/>
    </reaction>
    <physiologicalReaction direction="left-to-right" evidence="2">
        <dbReference type="Rhea" id="RHEA:19670"/>
    </physiologicalReaction>
</comment>
<comment type="subunit">
    <text evidence="2">Monomer.</text>
</comment>
<comment type="subcellular location">
    <subcellularLocation>
        <location evidence="2">Cytoplasm</location>
    </subcellularLocation>
</comment>
<comment type="similarity">
    <text evidence="2">Belongs to the TRAFAC class translation factor GTPase superfamily. Classic translation factor GTPase family. EF-Tu/EF-1A subfamily.</text>
</comment>
<feature type="chain" id="PRO_0000337590" description="Elongation factor Tu 2">
    <location>
        <begin position="1"/>
        <end position="394"/>
    </location>
</feature>
<feature type="domain" description="tr-type G">
    <location>
        <begin position="10"/>
        <end position="204"/>
    </location>
</feature>
<feature type="region of interest" description="G1" evidence="1">
    <location>
        <begin position="19"/>
        <end position="26"/>
    </location>
</feature>
<feature type="region of interest" description="G2" evidence="1">
    <location>
        <begin position="60"/>
        <end position="64"/>
    </location>
</feature>
<feature type="region of interest" description="G3" evidence="1">
    <location>
        <begin position="81"/>
        <end position="84"/>
    </location>
</feature>
<feature type="region of interest" description="G4" evidence="1">
    <location>
        <begin position="136"/>
        <end position="139"/>
    </location>
</feature>
<feature type="region of interest" description="G5" evidence="1">
    <location>
        <begin position="174"/>
        <end position="176"/>
    </location>
</feature>
<feature type="binding site" evidence="2">
    <location>
        <begin position="19"/>
        <end position="26"/>
    </location>
    <ligand>
        <name>GTP</name>
        <dbReference type="ChEBI" id="CHEBI:37565"/>
    </ligand>
</feature>
<feature type="binding site" evidence="2">
    <location>
        <position position="26"/>
    </location>
    <ligand>
        <name>Mg(2+)</name>
        <dbReference type="ChEBI" id="CHEBI:18420"/>
    </ligand>
</feature>
<feature type="binding site" evidence="2">
    <location>
        <begin position="81"/>
        <end position="85"/>
    </location>
    <ligand>
        <name>GTP</name>
        <dbReference type="ChEBI" id="CHEBI:37565"/>
    </ligand>
</feature>
<feature type="binding site" evidence="2">
    <location>
        <begin position="136"/>
        <end position="139"/>
    </location>
    <ligand>
        <name>GTP</name>
        <dbReference type="ChEBI" id="CHEBI:37565"/>
    </ligand>
</feature>
<organism>
    <name type="scientific">Yersinia pseudotuberculosis serotype I (strain IP32953)</name>
    <dbReference type="NCBI Taxonomy" id="273123"/>
    <lineage>
        <taxon>Bacteria</taxon>
        <taxon>Pseudomonadati</taxon>
        <taxon>Pseudomonadota</taxon>
        <taxon>Gammaproteobacteria</taxon>
        <taxon>Enterobacterales</taxon>
        <taxon>Yersiniaceae</taxon>
        <taxon>Yersinia</taxon>
    </lineage>
</organism>
<sequence length="394" mass="43160">MSKEKFERTKPHVNVGTIGHVDHGKTTLTAAITTVLAKTYGGSARAFDQIDNAPEEKARGITINTSHVEYDTPARHYAHVDCPGHADYVKNMITGAAQMDGAILVVAATDGPMPQTREHILLGRQVGVPYIIVFMNKCDMVDDEELLELVEMEVRELLSAYDFPGDDLPVVRGSALKALEGEAEWEAKIIELAGYLDSYIPEPERAIDKPFLLPIEDVFSISGRGTVVTGRVERGIVKVGEEVEIVGIKDTVKSTCTGVEMFRKLLDEGRAGENVGVLLRGIKREDIERGQVLAKPGSIKPHTTFESEVYILSKDEGGRHTPFFKGYRPQFYFRTTDVTGTIELPEGVEMVMPGDNINMIVTLIHPIAMDDGLRFAIREGGRTVGAGVVAKVIA</sequence>